<gene>
    <name evidence="1" type="primary">adk</name>
    <name type="ordered locus">ML1832</name>
    <name type="ORF">MLCB2492.28</name>
</gene>
<protein>
    <recommendedName>
        <fullName evidence="1">Adenylate kinase</fullName>
        <shortName evidence="1">AK</shortName>
        <ecNumber evidence="1">2.7.4.3</ecNumber>
    </recommendedName>
    <alternativeName>
        <fullName evidence="1">ATP-AMP transphosphorylase</fullName>
    </alternativeName>
    <alternativeName>
        <fullName evidence="1">ATP:AMP phosphotransferase</fullName>
    </alternativeName>
    <alternativeName>
        <fullName evidence="1">Adenylate monophosphate kinase</fullName>
    </alternativeName>
</protein>
<proteinExistence type="inferred from homology"/>
<reference key="1">
    <citation type="journal article" date="2001" name="Nature">
        <title>Massive gene decay in the leprosy bacillus.</title>
        <authorList>
            <person name="Cole S.T."/>
            <person name="Eiglmeier K."/>
            <person name="Parkhill J."/>
            <person name="James K.D."/>
            <person name="Thomson N.R."/>
            <person name="Wheeler P.R."/>
            <person name="Honore N."/>
            <person name="Garnier T."/>
            <person name="Churcher C.M."/>
            <person name="Harris D.E."/>
            <person name="Mungall K.L."/>
            <person name="Basham D."/>
            <person name="Brown D."/>
            <person name="Chillingworth T."/>
            <person name="Connor R."/>
            <person name="Davies R.M."/>
            <person name="Devlin K."/>
            <person name="Duthoy S."/>
            <person name="Feltwell T."/>
            <person name="Fraser A."/>
            <person name="Hamlin N."/>
            <person name="Holroyd S."/>
            <person name="Hornsby T."/>
            <person name="Jagels K."/>
            <person name="Lacroix C."/>
            <person name="Maclean J."/>
            <person name="Moule S."/>
            <person name="Murphy L.D."/>
            <person name="Oliver K."/>
            <person name="Quail M.A."/>
            <person name="Rajandream M.A."/>
            <person name="Rutherford K.M."/>
            <person name="Rutter S."/>
            <person name="Seeger K."/>
            <person name="Simon S."/>
            <person name="Simmonds M."/>
            <person name="Skelton J."/>
            <person name="Squares R."/>
            <person name="Squares S."/>
            <person name="Stevens K."/>
            <person name="Taylor K."/>
            <person name="Whitehead S."/>
            <person name="Woodward J.R."/>
            <person name="Barrell B.G."/>
        </authorList>
    </citation>
    <scope>NUCLEOTIDE SEQUENCE [LARGE SCALE GENOMIC DNA]</scope>
    <source>
        <strain>TN</strain>
    </source>
</reference>
<sequence length="181" mass="20111">MRVVLLGPPGAGKGTQAQRLAEKLGIPQISTGELFRRNIEKDTKLGHEAKKYLDAGDLVPADLTNQLVDDRLNKSDTVDGFILDGYPRSLEQAKALHEMLERRGTDIDAVLEFRVSQAVVLERLKGRGRADDTDDVVINRMNIYRDETASLLEYYSSELKTIDAIGTMDEVFARALHALGK</sequence>
<evidence type="ECO:0000255" key="1">
    <source>
        <dbReference type="HAMAP-Rule" id="MF_00235"/>
    </source>
</evidence>
<evidence type="ECO:0000305" key="2"/>
<dbReference type="EC" id="2.7.4.3" evidence="1"/>
<dbReference type="EMBL" id="Z98756">
    <property type="protein sequence ID" value="CAB11460.1"/>
    <property type="molecule type" value="Genomic_DNA"/>
</dbReference>
<dbReference type="EMBL" id="AL583923">
    <property type="protein sequence ID" value="CAC30786.1"/>
    <property type="molecule type" value="Genomic_DNA"/>
</dbReference>
<dbReference type="PIR" id="B87138">
    <property type="entry name" value="B87138"/>
</dbReference>
<dbReference type="PIR" id="T45390">
    <property type="entry name" value="T45390"/>
</dbReference>
<dbReference type="RefSeq" id="NP_302242.1">
    <property type="nucleotide sequence ID" value="NC_002677.1"/>
</dbReference>
<dbReference type="RefSeq" id="WP_010908563.1">
    <property type="nucleotide sequence ID" value="NC_002677.1"/>
</dbReference>
<dbReference type="SMR" id="O33007"/>
<dbReference type="STRING" id="272631.gene:17575680"/>
<dbReference type="KEGG" id="mle:ML1832"/>
<dbReference type="PATRIC" id="fig|272631.5.peg.3476"/>
<dbReference type="Leproma" id="ML1832"/>
<dbReference type="eggNOG" id="COG0563">
    <property type="taxonomic scope" value="Bacteria"/>
</dbReference>
<dbReference type="HOGENOM" id="CLU_032354_4_1_11"/>
<dbReference type="OrthoDB" id="9805030at2"/>
<dbReference type="UniPathway" id="UPA00588">
    <property type="reaction ID" value="UER00649"/>
</dbReference>
<dbReference type="Proteomes" id="UP000000806">
    <property type="component" value="Chromosome"/>
</dbReference>
<dbReference type="GO" id="GO:0005737">
    <property type="term" value="C:cytoplasm"/>
    <property type="evidence" value="ECO:0007669"/>
    <property type="project" value="UniProtKB-SubCell"/>
</dbReference>
<dbReference type="GO" id="GO:0004017">
    <property type="term" value="F:adenylate kinase activity"/>
    <property type="evidence" value="ECO:0007669"/>
    <property type="project" value="UniProtKB-UniRule"/>
</dbReference>
<dbReference type="GO" id="GO:0005524">
    <property type="term" value="F:ATP binding"/>
    <property type="evidence" value="ECO:0007669"/>
    <property type="project" value="UniProtKB-UniRule"/>
</dbReference>
<dbReference type="GO" id="GO:0044209">
    <property type="term" value="P:AMP salvage"/>
    <property type="evidence" value="ECO:0007669"/>
    <property type="project" value="UniProtKB-UniRule"/>
</dbReference>
<dbReference type="CDD" id="cd01428">
    <property type="entry name" value="ADK"/>
    <property type="match status" value="1"/>
</dbReference>
<dbReference type="Gene3D" id="3.40.50.300">
    <property type="entry name" value="P-loop containing nucleotide triphosphate hydrolases"/>
    <property type="match status" value="1"/>
</dbReference>
<dbReference type="HAMAP" id="MF_00235">
    <property type="entry name" value="Adenylate_kinase_Adk"/>
    <property type="match status" value="1"/>
</dbReference>
<dbReference type="InterPro" id="IPR006259">
    <property type="entry name" value="Adenyl_kin_sub"/>
</dbReference>
<dbReference type="InterPro" id="IPR000850">
    <property type="entry name" value="Adenylat/UMP-CMP_kin"/>
</dbReference>
<dbReference type="InterPro" id="IPR033690">
    <property type="entry name" value="Adenylat_kinase_CS"/>
</dbReference>
<dbReference type="InterPro" id="IPR027417">
    <property type="entry name" value="P-loop_NTPase"/>
</dbReference>
<dbReference type="NCBIfam" id="TIGR01351">
    <property type="entry name" value="adk"/>
    <property type="match status" value="1"/>
</dbReference>
<dbReference type="NCBIfam" id="NF001381">
    <property type="entry name" value="PRK00279.1-3"/>
    <property type="match status" value="1"/>
</dbReference>
<dbReference type="NCBIfam" id="NF011100">
    <property type="entry name" value="PRK14527.1"/>
    <property type="match status" value="1"/>
</dbReference>
<dbReference type="NCBIfam" id="NF011105">
    <property type="entry name" value="PRK14532.1"/>
    <property type="match status" value="1"/>
</dbReference>
<dbReference type="PANTHER" id="PTHR23359">
    <property type="entry name" value="NUCLEOTIDE KINASE"/>
    <property type="match status" value="1"/>
</dbReference>
<dbReference type="Pfam" id="PF00406">
    <property type="entry name" value="ADK"/>
    <property type="match status" value="1"/>
</dbReference>
<dbReference type="PRINTS" id="PR00094">
    <property type="entry name" value="ADENYLTKNASE"/>
</dbReference>
<dbReference type="SUPFAM" id="SSF52540">
    <property type="entry name" value="P-loop containing nucleoside triphosphate hydrolases"/>
    <property type="match status" value="1"/>
</dbReference>
<dbReference type="PROSITE" id="PS00113">
    <property type="entry name" value="ADENYLATE_KINASE"/>
    <property type="match status" value="1"/>
</dbReference>
<feature type="chain" id="PRO_0000158799" description="Adenylate kinase">
    <location>
        <begin position="1"/>
        <end position="181"/>
    </location>
</feature>
<feature type="region of interest" description="NMP" evidence="1">
    <location>
        <begin position="30"/>
        <end position="59"/>
    </location>
</feature>
<feature type="region of interest" description="LID" evidence="1">
    <location>
        <begin position="126"/>
        <end position="132"/>
    </location>
</feature>
<feature type="binding site" evidence="1">
    <location>
        <begin position="10"/>
        <end position="15"/>
    </location>
    <ligand>
        <name>ATP</name>
        <dbReference type="ChEBI" id="CHEBI:30616"/>
    </ligand>
</feature>
<feature type="binding site" evidence="1">
    <location>
        <position position="31"/>
    </location>
    <ligand>
        <name>AMP</name>
        <dbReference type="ChEBI" id="CHEBI:456215"/>
    </ligand>
</feature>
<feature type="binding site" evidence="1">
    <location>
        <position position="36"/>
    </location>
    <ligand>
        <name>AMP</name>
        <dbReference type="ChEBI" id="CHEBI:456215"/>
    </ligand>
</feature>
<feature type="binding site" evidence="1">
    <location>
        <begin position="57"/>
        <end position="59"/>
    </location>
    <ligand>
        <name>AMP</name>
        <dbReference type="ChEBI" id="CHEBI:456215"/>
    </ligand>
</feature>
<feature type="binding site" evidence="1">
    <location>
        <begin position="85"/>
        <end position="88"/>
    </location>
    <ligand>
        <name>AMP</name>
        <dbReference type="ChEBI" id="CHEBI:456215"/>
    </ligand>
</feature>
<feature type="binding site" evidence="1">
    <location>
        <position position="92"/>
    </location>
    <ligand>
        <name>AMP</name>
        <dbReference type="ChEBI" id="CHEBI:456215"/>
    </ligand>
</feature>
<feature type="binding site" evidence="1">
    <location>
        <position position="127"/>
    </location>
    <ligand>
        <name>ATP</name>
        <dbReference type="ChEBI" id="CHEBI:30616"/>
    </ligand>
</feature>
<feature type="binding site" evidence="1">
    <location>
        <position position="129"/>
    </location>
    <ligand>
        <name>AMP</name>
        <dbReference type="ChEBI" id="CHEBI:456215"/>
    </ligand>
</feature>
<feature type="binding site" evidence="1">
    <location>
        <position position="140"/>
    </location>
    <ligand>
        <name>AMP</name>
        <dbReference type="ChEBI" id="CHEBI:456215"/>
    </ligand>
</feature>
<feature type="binding site" evidence="1">
    <location>
        <position position="166"/>
    </location>
    <ligand>
        <name>ATP</name>
        <dbReference type="ChEBI" id="CHEBI:30616"/>
    </ligand>
</feature>
<feature type="sequence conflict" description="In Ref. 1; CAB11460." evidence="2" ref="1">
    <original>A</original>
    <variation>R</variation>
    <location>
        <position position="149"/>
    </location>
</feature>
<keyword id="KW-0067">ATP-binding</keyword>
<keyword id="KW-0963">Cytoplasm</keyword>
<keyword id="KW-0418">Kinase</keyword>
<keyword id="KW-0545">Nucleotide biosynthesis</keyword>
<keyword id="KW-0547">Nucleotide-binding</keyword>
<keyword id="KW-1185">Reference proteome</keyword>
<keyword id="KW-0808">Transferase</keyword>
<comment type="function">
    <text evidence="1">Catalyzes the reversible transfer of the terminal phosphate group between ATP and AMP. Plays an important role in cellular energy homeostasis and in adenine nucleotide metabolism.</text>
</comment>
<comment type="catalytic activity">
    <reaction evidence="1">
        <text>AMP + ATP = 2 ADP</text>
        <dbReference type="Rhea" id="RHEA:12973"/>
        <dbReference type="ChEBI" id="CHEBI:30616"/>
        <dbReference type="ChEBI" id="CHEBI:456215"/>
        <dbReference type="ChEBI" id="CHEBI:456216"/>
        <dbReference type="EC" id="2.7.4.3"/>
    </reaction>
</comment>
<comment type="pathway">
    <text evidence="1">Purine metabolism; AMP biosynthesis via salvage pathway; AMP from ADP: step 1/1.</text>
</comment>
<comment type="subunit">
    <text evidence="1">Monomer.</text>
</comment>
<comment type="subcellular location">
    <subcellularLocation>
        <location evidence="1">Cytoplasm</location>
    </subcellularLocation>
</comment>
<comment type="domain">
    <text evidence="1">Consists of three domains, a large central CORE domain and two small peripheral domains, NMPbind and LID, which undergo movements during catalysis. The LID domain closes over the site of phosphoryl transfer upon ATP binding. Assembling and dissambling the active center during each catalytic cycle provides an effective means to prevent ATP hydrolysis.</text>
</comment>
<comment type="similarity">
    <text evidence="1">Belongs to the adenylate kinase family.</text>
</comment>
<name>KAD_MYCLE</name>
<accession>O33007</accession>
<organism>
    <name type="scientific">Mycobacterium leprae (strain TN)</name>
    <dbReference type="NCBI Taxonomy" id="272631"/>
    <lineage>
        <taxon>Bacteria</taxon>
        <taxon>Bacillati</taxon>
        <taxon>Actinomycetota</taxon>
        <taxon>Actinomycetes</taxon>
        <taxon>Mycobacteriales</taxon>
        <taxon>Mycobacteriaceae</taxon>
        <taxon>Mycobacterium</taxon>
    </lineage>
</organism>